<feature type="chain" id="PRO_0000097462" description="Ribosome assembly protein 3">
    <location>
        <begin position="1"/>
        <end position="195"/>
    </location>
</feature>
<feature type="region of interest" description="Disordered" evidence="2">
    <location>
        <begin position="1"/>
        <end position="61"/>
    </location>
</feature>
<feature type="compositionally biased region" description="Basic residues" evidence="2">
    <location>
        <begin position="9"/>
        <end position="21"/>
    </location>
</feature>
<feature type="compositionally biased region" description="Low complexity" evidence="2">
    <location>
        <begin position="27"/>
        <end position="38"/>
    </location>
</feature>
<dbReference type="EMBL" id="CP017623">
    <property type="protein sequence ID" value="AOW26145.1"/>
    <property type="molecule type" value="Genomic_DNA"/>
</dbReference>
<dbReference type="RefSeq" id="XP_713583.2">
    <property type="nucleotide sequence ID" value="XM_708490.2"/>
</dbReference>
<dbReference type="SMR" id="Q59VF9"/>
<dbReference type="FunCoup" id="Q59VF9">
    <property type="interactions" value="300"/>
</dbReference>
<dbReference type="STRING" id="237561.Q59VF9"/>
<dbReference type="EnsemblFungi" id="C1_04710C_A-T">
    <property type="protein sequence ID" value="C1_04710C_A-T-p1"/>
    <property type="gene ID" value="C1_04710C_A"/>
</dbReference>
<dbReference type="GeneID" id="3644764"/>
<dbReference type="KEGG" id="cal:CAALFM_C104710CA"/>
<dbReference type="CGD" id="CAL0000175312">
    <property type="gene designation" value="orf19.8395"/>
</dbReference>
<dbReference type="VEuPathDB" id="FungiDB:C1_04710C_A"/>
<dbReference type="eggNOG" id="ENOG502S5DP">
    <property type="taxonomic scope" value="Eukaryota"/>
</dbReference>
<dbReference type="HOGENOM" id="CLU_119118_0_0_1"/>
<dbReference type="InParanoid" id="Q59VF9"/>
<dbReference type="OMA" id="DAHNNNK"/>
<dbReference type="OrthoDB" id="69550at2759"/>
<dbReference type="PRO" id="PR:Q59VF9"/>
<dbReference type="Proteomes" id="UP000000559">
    <property type="component" value="Chromosome 1"/>
</dbReference>
<dbReference type="GO" id="GO:0005730">
    <property type="term" value="C:nucleolus"/>
    <property type="evidence" value="ECO:0007669"/>
    <property type="project" value="UniProtKB-SubCell"/>
</dbReference>
<dbReference type="GO" id="GO:0030687">
    <property type="term" value="C:preribosome, large subunit precursor"/>
    <property type="evidence" value="ECO:0000318"/>
    <property type="project" value="GO_Central"/>
</dbReference>
<dbReference type="GO" id="GO:0000027">
    <property type="term" value="P:ribosomal large subunit assembly"/>
    <property type="evidence" value="ECO:0000318"/>
    <property type="project" value="GO_Central"/>
</dbReference>
<dbReference type="InterPro" id="IPR051898">
    <property type="entry name" value="Ribosome_Assembly_3"/>
</dbReference>
<dbReference type="InterPro" id="IPR028217">
    <property type="entry name" value="Rsa3_C"/>
</dbReference>
<dbReference type="PANTHER" id="PTHR28127">
    <property type="entry name" value="RIBOSOME ASSEMBLY PROTEIN 3"/>
    <property type="match status" value="1"/>
</dbReference>
<dbReference type="PANTHER" id="PTHR28127:SF1">
    <property type="entry name" value="RIBOSOME ASSEMBLY PROTEIN 3"/>
    <property type="match status" value="1"/>
</dbReference>
<dbReference type="Pfam" id="PF14615">
    <property type="entry name" value="Rsa3"/>
    <property type="match status" value="1"/>
</dbReference>
<gene>
    <name type="primary">RSA3</name>
    <name type="ordered locus">CAALFM_C104710CA</name>
    <name type="ORF">CaO19.773</name>
    <name type="ORF">CaO19.8395</name>
</gene>
<keyword id="KW-0539">Nucleus</keyword>
<keyword id="KW-1185">Reference proteome</keyword>
<keyword id="KW-0687">Ribonucleoprotein</keyword>
<keyword id="KW-0690">Ribosome biogenesis</keyword>
<organism>
    <name type="scientific">Candida albicans (strain SC5314 / ATCC MYA-2876)</name>
    <name type="common">Yeast</name>
    <dbReference type="NCBI Taxonomy" id="237561"/>
    <lineage>
        <taxon>Eukaryota</taxon>
        <taxon>Fungi</taxon>
        <taxon>Dikarya</taxon>
        <taxon>Ascomycota</taxon>
        <taxon>Saccharomycotina</taxon>
        <taxon>Pichiomycetes</taxon>
        <taxon>Debaryomycetaceae</taxon>
        <taxon>Candida/Lodderomyces clade</taxon>
        <taxon>Candida</taxon>
    </lineage>
</organism>
<accession>Q59VF9</accession>
<accession>A0A1D8PDD3</accession>
<protein>
    <recommendedName>
        <fullName>Ribosome assembly protein 3</fullName>
    </recommendedName>
</protein>
<comment type="function">
    <text evidence="1">Required for efficient biogenesis of the 60S ribosomal subunit.</text>
</comment>
<comment type="subunit">
    <text evidence="1">Associates with nucleolar pre-ribosomal particles.</text>
</comment>
<comment type="subcellular location">
    <subcellularLocation>
        <location evidence="1">Nucleus</location>
        <location evidence="1">Nucleolus</location>
    </subcellularLocation>
</comment>
<comment type="similarity">
    <text evidence="3">Belongs to the RSA3 family.</text>
</comment>
<proteinExistence type="inferred from homology"/>
<evidence type="ECO:0000250" key="1"/>
<evidence type="ECO:0000256" key="2">
    <source>
        <dbReference type="SAM" id="MobiDB-lite"/>
    </source>
</evidence>
<evidence type="ECO:0000305" key="3"/>
<sequence length="195" mass="21939">MAASDAHNNNKKRSNRRRKKRRTEDFSSSSESSSSSSSESDHEDLDEPEKEISKQDINIDDIDIESDNENSALTNDKGNKLIPQNLSITEKQQLSTVPFTTTSISNITNDNQIKNTPNINEISKNLDQKKTQLNNEFLKIMTTEFGDDLDELRKKPDFTEKSLVILAKTLQSGVNMFDIDVLNGLIQESGNTSNQ</sequence>
<reference key="1">
    <citation type="journal article" date="2004" name="Proc. Natl. Acad. Sci. U.S.A.">
        <title>The diploid genome sequence of Candida albicans.</title>
        <authorList>
            <person name="Jones T."/>
            <person name="Federspiel N.A."/>
            <person name="Chibana H."/>
            <person name="Dungan J."/>
            <person name="Kalman S."/>
            <person name="Magee B.B."/>
            <person name="Newport G."/>
            <person name="Thorstenson Y.R."/>
            <person name="Agabian N."/>
            <person name="Magee P.T."/>
            <person name="Davis R.W."/>
            <person name="Scherer S."/>
        </authorList>
    </citation>
    <scope>NUCLEOTIDE SEQUENCE [LARGE SCALE GENOMIC DNA]</scope>
    <source>
        <strain>SC5314 / ATCC MYA-2876</strain>
    </source>
</reference>
<reference key="2">
    <citation type="journal article" date="2007" name="Genome Biol.">
        <title>Assembly of the Candida albicans genome into sixteen supercontigs aligned on the eight chromosomes.</title>
        <authorList>
            <person name="van het Hoog M."/>
            <person name="Rast T.J."/>
            <person name="Martchenko M."/>
            <person name="Grindle S."/>
            <person name="Dignard D."/>
            <person name="Hogues H."/>
            <person name="Cuomo C."/>
            <person name="Berriman M."/>
            <person name="Scherer S."/>
            <person name="Magee B.B."/>
            <person name="Whiteway M."/>
            <person name="Chibana H."/>
            <person name="Nantel A."/>
            <person name="Magee P.T."/>
        </authorList>
    </citation>
    <scope>GENOME REANNOTATION</scope>
    <source>
        <strain>SC5314 / ATCC MYA-2876</strain>
    </source>
</reference>
<reference key="3">
    <citation type="journal article" date="2013" name="Genome Biol.">
        <title>Assembly of a phased diploid Candida albicans genome facilitates allele-specific measurements and provides a simple model for repeat and indel structure.</title>
        <authorList>
            <person name="Muzzey D."/>
            <person name="Schwartz K."/>
            <person name="Weissman J.S."/>
            <person name="Sherlock G."/>
        </authorList>
    </citation>
    <scope>NUCLEOTIDE SEQUENCE [LARGE SCALE GENOMIC DNA]</scope>
    <scope>GENOME REANNOTATION</scope>
    <source>
        <strain>SC5314 / ATCC MYA-2876</strain>
    </source>
</reference>
<name>RSA3_CANAL</name>